<dbReference type="EC" id="7.6.2.-"/>
<dbReference type="EMBL" id="AL123456">
    <property type="protein sequence ID" value="CCP45486.1"/>
    <property type="molecule type" value="Genomic_DNA"/>
</dbReference>
<dbReference type="PIR" id="C70529">
    <property type="entry name" value="C70529"/>
</dbReference>
<dbReference type="RefSeq" id="NP_217204.1">
    <property type="nucleotide sequence ID" value="NC_000962.3"/>
</dbReference>
<dbReference type="RefSeq" id="WP_003917051.1">
    <property type="nucleotide sequence ID" value="NZ_NVQJ01000017.1"/>
</dbReference>
<dbReference type="SMR" id="P9WQL7"/>
<dbReference type="FunCoup" id="P9WQL7">
    <property type="interactions" value="87"/>
</dbReference>
<dbReference type="STRING" id="83332.Rv2688c"/>
<dbReference type="PaxDb" id="83332-Rv2688c"/>
<dbReference type="DNASU" id="888463"/>
<dbReference type="GeneID" id="888463"/>
<dbReference type="KEGG" id="mtu:Rv2688c"/>
<dbReference type="KEGG" id="mtv:RVBD_2688c"/>
<dbReference type="TubercuList" id="Rv2688c"/>
<dbReference type="eggNOG" id="COG1131">
    <property type="taxonomic scope" value="Bacteria"/>
</dbReference>
<dbReference type="InParanoid" id="P9WQL7"/>
<dbReference type="OrthoDB" id="9804819at2"/>
<dbReference type="PhylomeDB" id="P9WQL7"/>
<dbReference type="Proteomes" id="UP000001584">
    <property type="component" value="Chromosome"/>
</dbReference>
<dbReference type="GO" id="GO:0005886">
    <property type="term" value="C:plasma membrane"/>
    <property type="evidence" value="ECO:0000318"/>
    <property type="project" value="GO_Central"/>
</dbReference>
<dbReference type="GO" id="GO:0005524">
    <property type="term" value="F:ATP binding"/>
    <property type="evidence" value="ECO:0007669"/>
    <property type="project" value="UniProtKB-KW"/>
</dbReference>
<dbReference type="GO" id="GO:0016887">
    <property type="term" value="F:ATP hydrolysis activity"/>
    <property type="evidence" value="ECO:0007669"/>
    <property type="project" value="InterPro"/>
</dbReference>
<dbReference type="GO" id="GO:0015562">
    <property type="term" value="F:efflux transmembrane transporter activity"/>
    <property type="evidence" value="ECO:0000315"/>
    <property type="project" value="MTBBASE"/>
</dbReference>
<dbReference type="GO" id="GO:0022857">
    <property type="term" value="F:transmembrane transporter activity"/>
    <property type="evidence" value="ECO:0000318"/>
    <property type="project" value="GO_Central"/>
</dbReference>
<dbReference type="GO" id="GO:0046677">
    <property type="term" value="P:response to antibiotic"/>
    <property type="evidence" value="ECO:0007669"/>
    <property type="project" value="UniProtKB-KW"/>
</dbReference>
<dbReference type="GO" id="GO:0055085">
    <property type="term" value="P:transmembrane transport"/>
    <property type="evidence" value="ECO:0000318"/>
    <property type="project" value="GO_Central"/>
</dbReference>
<dbReference type="GO" id="GO:1990961">
    <property type="term" value="P:xenobiotic detoxification by transmembrane export across the plasma membrane"/>
    <property type="evidence" value="ECO:0000315"/>
    <property type="project" value="MTBBASE"/>
</dbReference>
<dbReference type="CDD" id="cd03230">
    <property type="entry name" value="ABC_DR_subfamily_A"/>
    <property type="match status" value="1"/>
</dbReference>
<dbReference type="FunFam" id="3.40.50.300:FF:000589">
    <property type="entry name" value="ABC transporter, ATP-binding subunit"/>
    <property type="match status" value="1"/>
</dbReference>
<dbReference type="Gene3D" id="3.40.50.300">
    <property type="entry name" value="P-loop containing nucleotide triphosphate hydrolases"/>
    <property type="match status" value="1"/>
</dbReference>
<dbReference type="InterPro" id="IPR003593">
    <property type="entry name" value="AAA+_ATPase"/>
</dbReference>
<dbReference type="InterPro" id="IPR003439">
    <property type="entry name" value="ABC_transporter-like_ATP-bd"/>
</dbReference>
<dbReference type="InterPro" id="IPR050763">
    <property type="entry name" value="ABC_transporter_ATP-binding"/>
</dbReference>
<dbReference type="InterPro" id="IPR027417">
    <property type="entry name" value="P-loop_NTPase"/>
</dbReference>
<dbReference type="PANTHER" id="PTHR42711">
    <property type="entry name" value="ABC TRANSPORTER ATP-BINDING PROTEIN"/>
    <property type="match status" value="1"/>
</dbReference>
<dbReference type="PANTHER" id="PTHR42711:SF18">
    <property type="entry name" value="ABC TRANSPORTER, ATP-BINDING PROTEIN"/>
    <property type="match status" value="1"/>
</dbReference>
<dbReference type="Pfam" id="PF00005">
    <property type="entry name" value="ABC_tran"/>
    <property type="match status" value="1"/>
</dbReference>
<dbReference type="SMART" id="SM00382">
    <property type="entry name" value="AAA"/>
    <property type="match status" value="1"/>
</dbReference>
<dbReference type="SUPFAM" id="SSF52540">
    <property type="entry name" value="P-loop containing nucleoside triphosphate hydrolases"/>
    <property type="match status" value="1"/>
</dbReference>
<dbReference type="PROSITE" id="PS50893">
    <property type="entry name" value="ABC_TRANSPORTER_2"/>
    <property type="match status" value="1"/>
</dbReference>
<evidence type="ECO:0000250" key="1"/>
<evidence type="ECO:0000255" key="2">
    <source>
        <dbReference type="PROSITE-ProRule" id="PRU00434"/>
    </source>
</evidence>
<evidence type="ECO:0000269" key="3">
    <source>
    </source>
</evidence>
<evidence type="ECO:0000305" key="4"/>
<evidence type="ECO:0000305" key="5">
    <source>
    </source>
</evidence>
<proteinExistence type="evidence at protein level"/>
<protein>
    <recommendedName>
        <fullName>Fluoroquinolones export ATP-binding protein Rv2688c</fullName>
        <ecNumber>7.6.2.-</ecNumber>
    </recommendedName>
</protein>
<comment type="function">
    <text evidence="3">Part of the ABC transporter complex Rv2686c/Rv2687c/Rv2688c involved in fluoroquinolones export. Confers resistance to ciprofloxacin and, to a lesser extent, norfloxacin, moxifloxacin and sparfloxacin. Probably responsible for energy coupling to the transport system.</text>
</comment>
<comment type="activity regulation">
    <text evidence="3">Inhibited by reserpine and verapamil.</text>
</comment>
<comment type="subunit">
    <text evidence="5">The complex is composed of 2 ATP-binding proteins (Rv2688c) and 2 transmembrane proteins (Rv2686c and Rv2687c).</text>
</comment>
<comment type="subcellular location">
    <subcellularLocation>
        <location evidence="1">Cell membrane</location>
        <topology evidence="1">Peripheral membrane protein</topology>
    </subcellularLocation>
</comment>
<comment type="similarity">
    <text evidence="4">Belongs to the ABC transporter superfamily.</text>
</comment>
<gene>
    <name type="ordered locus">Rv2688c</name>
</gene>
<feature type="chain" id="PRO_0000390878" description="Fluoroquinolones export ATP-binding protein Rv2688c">
    <location>
        <begin position="1"/>
        <end position="301"/>
    </location>
</feature>
<feature type="domain" description="ABC transporter" evidence="2">
    <location>
        <begin position="18"/>
        <end position="246"/>
    </location>
</feature>
<feature type="binding site" evidence="2">
    <location>
        <begin position="52"/>
        <end position="59"/>
    </location>
    <ligand>
        <name>ATP</name>
        <dbReference type="ChEBI" id="CHEBI:30616"/>
    </ligand>
</feature>
<sequence length="301" mass="33100">MTALNRAVASARVGTEVIRVRGLTFRYPKAAEPAVRGMEFTVGRGEIFGLLGPSGAGKSTTQKLLIGLLRDHGGQATVWDKEPAEWGPDYYERIGVSFELPNHYQKLTGYENLRFFASLYAGATADPMQLLAAVGLADDAHTLVGKYSKGMQMRLPFARSLINDPELLFLDEPTSGLDPVNARKIKDIIVDLKARGRTIFLTTHDMATADELCDRVAFVVDGRIVALDSPTELKIARSRRRVRVEYRGDGGGLETAEFGMDGLADDPAFHSVLRNHHVETIHSREASLDDVFVEVTGRQLT</sequence>
<name>FLQE1_MYCTU</name>
<organism>
    <name type="scientific">Mycobacterium tuberculosis (strain ATCC 25618 / H37Rv)</name>
    <dbReference type="NCBI Taxonomy" id="83332"/>
    <lineage>
        <taxon>Bacteria</taxon>
        <taxon>Bacillati</taxon>
        <taxon>Actinomycetota</taxon>
        <taxon>Actinomycetes</taxon>
        <taxon>Mycobacteriales</taxon>
        <taxon>Mycobacteriaceae</taxon>
        <taxon>Mycobacterium</taxon>
        <taxon>Mycobacterium tuberculosis complex</taxon>
    </lineage>
</organism>
<keyword id="KW-0046">Antibiotic resistance</keyword>
<keyword id="KW-0067">ATP-binding</keyword>
<keyword id="KW-1003">Cell membrane</keyword>
<keyword id="KW-0472">Membrane</keyword>
<keyword id="KW-0547">Nucleotide-binding</keyword>
<keyword id="KW-1185">Reference proteome</keyword>
<keyword id="KW-1278">Translocase</keyword>
<keyword id="KW-0813">Transport</keyword>
<reference key="1">
    <citation type="journal article" date="1998" name="Nature">
        <title>Deciphering the biology of Mycobacterium tuberculosis from the complete genome sequence.</title>
        <authorList>
            <person name="Cole S.T."/>
            <person name="Brosch R."/>
            <person name="Parkhill J."/>
            <person name="Garnier T."/>
            <person name="Churcher C.M."/>
            <person name="Harris D.E."/>
            <person name="Gordon S.V."/>
            <person name="Eiglmeier K."/>
            <person name="Gas S."/>
            <person name="Barry C.E. III"/>
            <person name="Tekaia F."/>
            <person name="Badcock K."/>
            <person name="Basham D."/>
            <person name="Brown D."/>
            <person name="Chillingworth T."/>
            <person name="Connor R."/>
            <person name="Davies R.M."/>
            <person name="Devlin K."/>
            <person name="Feltwell T."/>
            <person name="Gentles S."/>
            <person name="Hamlin N."/>
            <person name="Holroyd S."/>
            <person name="Hornsby T."/>
            <person name="Jagels K."/>
            <person name="Krogh A."/>
            <person name="McLean J."/>
            <person name="Moule S."/>
            <person name="Murphy L.D."/>
            <person name="Oliver S."/>
            <person name="Osborne J."/>
            <person name="Quail M.A."/>
            <person name="Rajandream M.A."/>
            <person name="Rogers J."/>
            <person name="Rutter S."/>
            <person name="Seeger K."/>
            <person name="Skelton S."/>
            <person name="Squares S."/>
            <person name="Squares R."/>
            <person name="Sulston J.E."/>
            <person name="Taylor K."/>
            <person name="Whitehead S."/>
            <person name="Barrell B.G."/>
        </authorList>
    </citation>
    <scope>NUCLEOTIDE SEQUENCE [LARGE SCALE GENOMIC DNA]</scope>
    <source>
        <strain>ATCC 25618 / H37Rv</strain>
    </source>
</reference>
<reference key="2">
    <citation type="journal article" date="2004" name="Antimicrob. Agents Chemother.">
        <title>Rv2686c-Rv2687c-Rv2688c, an ABC fluoroquinolone efflux pump in Mycobacterium tuberculosis.</title>
        <authorList>
            <person name="Pasca M.R."/>
            <person name="Guglierame P."/>
            <person name="Arcesi F."/>
            <person name="Bellinzoni M."/>
            <person name="De Rossi E."/>
            <person name="Riccardi G."/>
        </authorList>
    </citation>
    <scope>FUNCTION IN FLUOROQUINOLONES EXPORT</scope>
    <scope>ACTIVITY REGULATION</scope>
    <scope>SUBUNIT</scope>
    <source>
        <strain>ATCC 25618 / H37Rv</strain>
    </source>
</reference>
<accession>P9WQL7</accession>
<accession>L0TAL1</accession>
<accession>O07190</accession>
<accession>Q8VJE4</accession>